<reference key="1">
    <citation type="journal article" date="1993" name="Genes Dev.">
        <title>CAR2, a prestalk cAMP receptor required for normal tip formation and late development of Dictyostelium discoideum.</title>
        <authorList>
            <person name="Saxe C.L. III"/>
            <person name="Ginsburg G.T."/>
            <person name="Louis J.M."/>
            <person name="Johnson R.L."/>
            <person name="Devreotes P.N."/>
            <person name="Kimmel A.R."/>
        </authorList>
    </citation>
    <scope>NUCLEOTIDE SEQUENCE [GENOMIC DNA]</scope>
</reference>
<reference key="2">
    <citation type="journal article" date="2005" name="Nature">
        <title>The genome of the social amoeba Dictyostelium discoideum.</title>
        <authorList>
            <person name="Eichinger L."/>
            <person name="Pachebat J.A."/>
            <person name="Gloeckner G."/>
            <person name="Rajandream M.A."/>
            <person name="Sucgang R."/>
            <person name="Berriman M."/>
            <person name="Song J."/>
            <person name="Olsen R."/>
            <person name="Szafranski K."/>
            <person name="Xu Q."/>
            <person name="Tunggal B."/>
            <person name="Kummerfeld S."/>
            <person name="Madera M."/>
            <person name="Konfortov B.A."/>
            <person name="Rivero F."/>
            <person name="Bankier A.T."/>
            <person name="Lehmann R."/>
            <person name="Hamlin N."/>
            <person name="Davies R."/>
            <person name="Gaudet P."/>
            <person name="Fey P."/>
            <person name="Pilcher K."/>
            <person name="Chen G."/>
            <person name="Saunders D."/>
            <person name="Sodergren E.J."/>
            <person name="Davis P."/>
            <person name="Kerhornou A."/>
            <person name="Nie X."/>
            <person name="Hall N."/>
            <person name="Anjard C."/>
            <person name="Hemphill L."/>
            <person name="Bason N."/>
            <person name="Farbrother P."/>
            <person name="Desany B."/>
            <person name="Just E."/>
            <person name="Morio T."/>
            <person name="Rost R."/>
            <person name="Churcher C.M."/>
            <person name="Cooper J."/>
            <person name="Haydock S."/>
            <person name="van Driessche N."/>
            <person name="Cronin A."/>
            <person name="Goodhead I."/>
            <person name="Muzny D.M."/>
            <person name="Mourier T."/>
            <person name="Pain A."/>
            <person name="Lu M."/>
            <person name="Harper D."/>
            <person name="Lindsay R."/>
            <person name="Hauser H."/>
            <person name="James K.D."/>
            <person name="Quiles M."/>
            <person name="Madan Babu M."/>
            <person name="Saito T."/>
            <person name="Buchrieser C."/>
            <person name="Wardroper A."/>
            <person name="Felder M."/>
            <person name="Thangavelu M."/>
            <person name="Johnson D."/>
            <person name="Knights A."/>
            <person name="Loulseged H."/>
            <person name="Mungall K.L."/>
            <person name="Oliver K."/>
            <person name="Price C."/>
            <person name="Quail M.A."/>
            <person name="Urushihara H."/>
            <person name="Hernandez J."/>
            <person name="Rabbinowitsch E."/>
            <person name="Steffen D."/>
            <person name="Sanders M."/>
            <person name="Ma J."/>
            <person name="Kohara Y."/>
            <person name="Sharp S."/>
            <person name="Simmonds M.N."/>
            <person name="Spiegler S."/>
            <person name="Tivey A."/>
            <person name="Sugano S."/>
            <person name="White B."/>
            <person name="Walker D."/>
            <person name="Woodward J.R."/>
            <person name="Winckler T."/>
            <person name="Tanaka Y."/>
            <person name="Shaulsky G."/>
            <person name="Schleicher M."/>
            <person name="Weinstock G.M."/>
            <person name="Rosenthal A."/>
            <person name="Cox E.C."/>
            <person name="Chisholm R.L."/>
            <person name="Gibbs R.A."/>
            <person name="Loomis W.F."/>
            <person name="Platzer M."/>
            <person name="Kay R.R."/>
            <person name="Williams J.G."/>
            <person name="Dear P.H."/>
            <person name="Noegel A.A."/>
            <person name="Barrell B.G."/>
            <person name="Kuspa A."/>
        </authorList>
    </citation>
    <scope>NUCLEOTIDE SEQUENCE [LARGE SCALE GENOMIC DNA]</scope>
    <source>
        <strain>AX4</strain>
    </source>
</reference>
<keyword id="KW-0297">G-protein coupled receptor</keyword>
<keyword id="KW-0472">Membrane</keyword>
<keyword id="KW-0597">Phosphoprotein</keyword>
<keyword id="KW-0675">Receptor</keyword>
<keyword id="KW-1185">Reference proteome</keyword>
<keyword id="KW-0807">Transducer</keyword>
<keyword id="KW-0812">Transmembrane</keyword>
<keyword id="KW-1133">Transmembrane helix</keyword>
<comment type="function">
    <text>Receptor for cAMP. Coordinates the aggregation of individual cells into a multicellular organism and regulates the expression of a large number of developmentally regulated genes. The activity of this receptor is mediated by G proteins. Plays a key role during tip formation and late development; involved in cAMP-directed patterning of pre stalk cells as they sort before and during tip formation.</text>
</comment>
<comment type="subcellular location">
    <subcellularLocation>
        <location>Membrane</location>
        <topology>Multi-pass membrane protein</topology>
    </subcellularLocation>
</comment>
<comment type="developmental stage">
    <text>Expressed only after cells have aggregated and, then, preferentially in prestalk cells.</text>
</comment>
<comment type="PTM">
    <text>C-terminal Ser or Thr residues may be phosphorylated.</text>
</comment>
<comment type="similarity">
    <text evidence="3">Belongs to the G-protein coupled receptor 5 family.</text>
</comment>
<gene>
    <name type="primary">carB</name>
    <name type="synonym">car2</name>
    <name type="ORF">DDB_G0288179</name>
</gene>
<name>CAR2_DICDI</name>
<sequence>MTIMSDIIAQRTILLIADFSSIIGCSLVLIGFWRLKLLRNHITKIISLFCATSLFKDVISTIITLLYKPDQTESGFPCYLHAIVITFGSLACWLWTLMLSFSIYNLIVRREPEPERFEKFYFCLCYGLPLISTIVMLSTHIIQPVGGWCWIGDNYDGYRFGLFYGPFFFIWGTSAILVGLTSKYTYSVIRSSVSDNKDKHMTYQFKLINYIVVFLVCWVFAIVNRILNGLNQFPTVPNVLHTYFSVSHGFYASITFIYNNPLMWRYFGAKFLLIFSKFGLFVQAQQRLELNKNNNNPSPIMRSKNALDNGADSSVVELPCLSKADSLSLDAENNIETPKENENQNHHHHHHHHHHHNHYNNNNNNNNINNKNDMI</sequence>
<feature type="chain" id="PRO_0000195081" description="Cyclic AMP receptor 2">
    <location>
        <begin position="1"/>
        <end position="375"/>
    </location>
</feature>
<feature type="topological domain" description="Extracellular" evidence="1">
    <location>
        <begin position="1"/>
        <end position="10"/>
    </location>
</feature>
<feature type="transmembrane region" description="Helical; Name=1" evidence="1">
    <location>
        <begin position="11"/>
        <end position="30"/>
    </location>
</feature>
<feature type="topological domain" description="Cytoplasmic" evidence="1">
    <location>
        <begin position="31"/>
        <end position="44"/>
    </location>
</feature>
<feature type="transmembrane region" description="Helical; Name=2" evidence="1">
    <location>
        <begin position="45"/>
        <end position="65"/>
    </location>
</feature>
<feature type="topological domain" description="Extracellular" evidence="1">
    <location>
        <begin position="66"/>
        <end position="82"/>
    </location>
</feature>
<feature type="transmembrane region" description="Helical; Name=3" evidence="1">
    <location>
        <begin position="83"/>
        <end position="108"/>
    </location>
</feature>
<feature type="topological domain" description="Cytoplasmic" evidence="1">
    <location>
        <begin position="109"/>
        <end position="119"/>
    </location>
</feature>
<feature type="transmembrane region" description="Helical; Name=4" evidence="1">
    <location>
        <begin position="120"/>
        <end position="138"/>
    </location>
</feature>
<feature type="topological domain" description="Extracellular" evidence="1">
    <location>
        <begin position="139"/>
        <end position="161"/>
    </location>
</feature>
<feature type="transmembrane region" description="Helical; Name=5" evidence="1">
    <location>
        <begin position="162"/>
        <end position="180"/>
    </location>
</feature>
<feature type="topological domain" description="Cytoplasmic" evidence="1">
    <location>
        <begin position="181"/>
        <end position="204"/>
    </location>
</feature>
<feature type="transmembrane region" description="Helical; Name=6" evidence="1">
    <location>
        <begin position="205"/>
        <end position="223"/>
    </location>
</feature>
<feature type="topological domain" description="Extracellular" evidence="1">
    <location>
        <begin position="224"/>
        <end position="234"/>
    </location>
</feature>
<feature type="transmembrane region" description="Helical; Name=7" evidence="1">
    <location>
        <begin position="235"/>
        <end position="259"/>
    </location>
</feature>
<feature type="topological domain" description="Cytoplasmic" evidence="1">
    <location>
        <begin position="260"/>
        <end position="375"/>
    </location>
</feature>
<feature type="region of interest" description="Disordered" evidence="2">
    <location>
        <begin position="338"/>
        <end position="375"/>
    </location>
</feature>
<feature type="compositionally biased region" description="Basic residues" evidence="2">
    <location>
        <begin position="346"/>
        <end position="358"/>
    </location>
</feature>
<feature type="compositionally biased region" description="Low complexity" evidence="2">
    <location>
        <begin position="359"/>
        <end position="375"/>
    </location>
</feature>
<feature type="modified residue" description="Phosphoserine" evidence="1">
    <location>
        <position position="192"/>
    </location>
</feature>
<feature type="modified residue" description="Phosphoserine" evidence="1">
    <location>
        <position position="298"/>
    </location>
</feature>
<feature type="modified residue" description="Phosphoserine" evidence="1">
    <location>
        <position position="303"/>
    </location>
</feature>
<feature type="sequence conflict" description="In Ref. 1; AAB25436." evidence="3" ref="1">
    <original>C</original>
    <variation>L</variation>
    <location>
        <position position="92"/>
    </location>
</feature>
<protein>
    <recommendedName>
        <fullName>Cyclic AMP receptor 2</fullName>
        <shortName>cAMP receptor 2</shortName>
    </recommendedName>
</protein>
<organism>
    <name type="scientific">Dictyostelium discoideum</name>
    <name type="common">Social amoeba</name>
    <dbReference type="NCBI Taxonomy" id="44689"/>
    <lineage>
        <taxon>Eukaryota</taxon>
        <taxon>Amoebozoa</taxon>
        <taxon>Evosea</taxon>
        <taxon>Eumycetozoa</taxon>
        <taxon>Dictyostelia</taxon>
        <taxon>Dictyosteliales</taxon>
        <taxon>Dictyosteliaceae</taxon>
        <taxon>Dictyostelium</taxon>
    </lineage>
</organism>
<dbReference type="EMBL" id="S55234">
    <property type="protein sequence ID" value="AAB25436.2"/>
    <property type="molecule type" value="Genomic_DNA"/>
</dbReference>
<dbReference type="EMBL" id="AAFI02000109">
    <property type="protein sequence ID" value="EAL63320.1"/>
    <property type="molecule type" value="Genomic_DNA"/>
</dbReference>
<dbReference type="PIR" id="A46390">
    <property type="entry name" value="A46390"/>
</dbReference>
<dbReference type="RefSeq" id="XP_636845.1">
    <property type="nucleotide sequence ID" value="XM_631753.1"/>
</dbReference>
<dbReference type="SMR" id="P34907"/>
<dbReference type="FunCoup" id="P34907">
    <property type="interactions" value="3"/>
</dbReference>
<dbReference type="STRING" id="44689.P34907"/>
<dbReference type="PaxDb" id="44689-DDB0191393"/>
<dbReference type="EnsemblProtists" id="EAL63320">
    <property type="protein sequence ID" value="EAL63320"/>
    <property type="gene ID" value="DDB_G0288179"/>
</dbReference>
<dbReference type="GeneID" id="8626513"/>
<dbReference type="KEGG" id="ddi:DDB_G0288179"/>
<dbReference type="dictyBase" id="DDB_G0288179">
    <property type="gene designation" value="carB"/>
</dbReference>
<dbReference type="VEuPathDB" id="AmoebaDB:DDB_G0288179"/>
<dbReference type="eggNOG" id="ENOG502RYGP">
    <property type="taxonomic scope" value="Eukaryota"/>
</dbReference>
<dbReference type="HOGENOM" id="CLU_050319_0_0_1"/>
<dbReference type="InParanoid" id="P34907"/>
<dbReference type="OMA" id="GWCWIGD"/>
<dbReference type="PhylomeDB" id="P34907"/>
<dbReference type="PRO" id="PR:P34907"/>
<dbReference type="Proteomes" id="UP000002195">
    <property type="component" value="Chromosome 5"/>
</dbReference>
<dbReference type="GO" id="GO:0005886">
    <property type="term" value="C:plasma membrane"/>
    <property type="evidence" value="ECO:0000318"/>
    <property type="project" value="GO_Central"/>
</dbReference>
<dbReference type="GO" id="GO:0010854">
    <property type="term" value="F:adenylate cyclase regulator activity"/>
    <property type="evidence" value="ECO:0000315"/>
    <property type="project" value="dictyBase"/>
</dbReference>
<dbReference type="GO" id="GO:0030552">
    <property type="term" value="F:cAMP binding"/>
    <property type="evidence" value="ECO:0000314"/>
    <property type="project" value="dictyBase"/>
</dbReference>
<dbReference type="GO" id="GO:0001646">
    <property type="term" value="F:cAMP receptor activity"/>
    <property type="evidence" value="ECO:0000304"/>
    <property type="project" value="dictyBase"/>
</dbReference>
<dbReference type="GO" id="GO:0004930">
    <property type="term" value="F:G protein-coupled receptor activity"/>
    <property type="evidence" value="ECO:0000318"/>
    <property type="project" value="GO_Central"/>
</dbReference>
<dbReference type="GO" id="GO:0007189">
    <property type="term" value="P:adenylate cyclase-activating G protein-coupled receptor signaling pathway"/>
    <property type="evidence" value="ECO:0000318"/>
    <property type="project" value="GO_Central"/>
</dbReference>
<dbReference type="GO" id="GO:0031154">
    <property type="term" value="P:culmination involved in sorocarp development"/>
    <property type="evidence" value="ECO:0000315"/>
    <property type="project" value="dictyBase"/>
</dbReference>
<dbReference type="GO" id="GO:0010629">
    <property type="term" value="P:negative regulation of gene expression"/>
    <property type="evidence" value="ECO:0000270"/>
    <property type="project" value="dictyBase"/>
</dbReference>
<dbReference type="GO" id="GO:0010628">
    <property type="term" value="P:positive regulation of gene expression"/>
    <property type="evidence" value="ECO:0000270"/>
    <property type="project" value="dictyBase"/>
</dbReference>
<dbReference type="GO" id="GO:0007165">
    <property type="term" value="P:signal transduction"/>
    <property type="evidence" value="ECO:0000304"/>
    <property type="project" value="dictyBase"/>
</dbReference>
<dbReference type="CDD" id="cd14940">
    <property type="entry name" value="7tmE_cAMP_R_Slime_mold"/>
    <property type="match status" value="1"/>
</dbReference>
<dbReference type="FunFam" id="1.20.1070.10:FF:000404">
    <property type="entry name" value="Cyclic AMP receptor-like protein A"/>
    <property type="match status" value="1"/>
</dbReference>
<dbReference type="Gene3D" id="1.20.1070.10">
    <property type="entry name" value="Rhodopsin 7-helix transmembrane proteins"/>
    <property type="match status" value="1"/>
</dbReference>
<dbReference type="InterPro" id="IPR022343">
    <property type="entry name" value="GCR1-cAMP_receptor"/>
</dbReference>
<dbReference type="InterPro" id="IPR017981">
    <property type="entry name" value="GPCR_2-like_7TM"/>
</dbReference>
<dbReference type="InterPro" id="IPR000848">
    <property type="entry name" value="GPCR_cAMP"/>
</dbReference>
<dbReference type="PANTHER" id="PTHR23112:SF23">
    <property type="entry name" value="CYCLIC AMP RECEPTOR 1-RELATED"/>
    <property type="match status" value="1"/>
</dbReference>
<dbReference type="PANTHER" id="PTHR23112">
    <property type="entry name" value="G PROTEIN-COUPLED RECEPTOR 157-RELATED"/>
    <property type="match status" value="1"/>
</dbReference>
<dbReference type="Pfam" id="PF05462">
    <property type="entry name" value="Dicty_CAR"/>
    <property type="match status" value="1"/>
</dbReference>
<dbReference type="PRINTS" id="PR02001">
    <property type="entry name" value="GCR1CAMPR"/>
</dbReference>
<dbReference type="PRINTS" id="PR00247">
    <property type="entry name" value="GPCRCAMP"/>
</dbReference>
<dbReference type="SUPFAM" id="SSF81321">
    <property type="entry name" value="Family A G protein-coupled receptor-like"/>
    <property type="match status" value="1"/>
</dbReference>
<dbReference type="PROSITE" id="PS50261">
    <property type="entry name" value="G_PROTEIN_RECEP_F2_4"/>
    <property type="match status" value="1"/>
</dbReference>
<accession>P34907</accession>
<accession>Q54J91</accession>
<evidence type="ECO:0000255" key="1"/>
<evidence type="ECO:0000256" key="2">
    <source>
        <dbReference type="SAM" id="MobiDB-lite"/>
    </source>
</evidence>
<evidence type="ECO:0000305" key="3"/>
<proteinExistence type="evidence at transcript level"/>